<organism>
    <name type="scientific">Bacillus subtilis (strain 168)</name>
    <dbReference type="NCBI Taxonomy" id="224308"/>
    <lineage>
        <taxon>Bacteria</taxon>
        <taxon>Bacillati</taxon>
        <taxon>Bacillota</taxon>
        <taxon>Bacilli</taxon>
        <taxon>Bacillales</taxon>
        <taxon>Bacillaceae</taxon>
        <taxon>Bacillus</taxon>
    </lineage>
</organism>
<gene>
    <name type="primary">ydzK</name>
    <name type="ordered locus">BSU04359</name>
</gene>
<feature type="chain" id="PRO_0000382205" description="Uncharacterized membrane protein YdzK">
    <location>
        <begin position="1"/>
        <end position="88"/>
    </location>
</feature>
<feature type="transmembrane region" description="Helical" evidence="1">
    <location>
        <begin position="3"/>
        <end position="23"/>
    </location>
</feature>
<feature type="transmembrane region" description="Helical" evidence="1">
    <location>
        <begin position="33"/>
        <end position="53"/>
    </location>
</feature>
<feature type="transmembrane region" description="Helical" evidence="1">
    <location>
        <begin position="61"/>
        <end position="81"/>
    </location>
</feature>
<comment type="subcellular location">
    <subcellularLocation>
        <location evidence="2">Cell membrane</location>
        <topology evidence="2">Multi-pass membrane protein</topology>
    </subcellularLocation>
</comment>
<accession>C0H3V4</accession>
<keyword id="KW-1003">Cell membrane</keyword>
<keyword id="KW-0472">Membrane</keyword>
<keyword id="KW-1185">Reference proteome</keyword>
<keyword id="KW-0812">Transmembrane</keyword>
<keyword id="KW-1133">Transmembrane helix</keyword>
<reference key="1">
    <citation type="journal article" date="1997" name="Nature">
        <title>The complete genome sequence of the Gram-positive bacterium Bacillus subtilis.</title>
        <authorList>
            <person name="Kunst F."/>
            <person name="Ogasawara N."/>
            <person name="Moszer I."/>
            <person name="Albertini A.M."/>
            <person name="Alloni G."/>
            <person name="Azevedo V."/>
            <person name="Bertero M.G."/>
            <person name="Bessieres P."/>
            <person name="Bolotin A."/>
            <person name="Borchert S."/>
            <person name="Borriss R."/>
            <person name="Boursier L."/>
            <person name="Brans A."/>
            <person name="Braun M."/>
            <person name="Brignell S.C."/>
            <person name="Bron S."/>
            <person name="Brouillet S."/>
            <person name="Bruschi C.V."/>
            <person name="Caldwell B."/>
            <person name="Capuano V."/>
            <person name="Carter N.M."/>
            <person name="Choi S.-K."/>
            <person name="Codani J.-J."/>
            <person name="Connerton I.F."/>
            <person name="Cummings N.J."/>
            <person name="Daniel R.A."/>
            <person name="Denizot F."/>
            <person name="Devine K.M."/>
            <person name="Duesterhoeft A."/>
            <person name="Ehrlich S.D."/>
            <person name="Emmerson P.T."/>
            <person name="Entian K.-D."/>
            <person name="Errington J."/>
            <person name="Fabret C."/>
            <person name="Ferrari E."/>
            <person name="Foulger D."/>
            <person name="Fritz C."/>
            <person name="Fujita M."/>
            <person name="Fujita Y."/>
            <person name="Fuma S."/>
            <person name="Galizzi A."/>
            <person name="Galleron N."/>
            <person name="Ghim S.-Y."/>
            <person name="Glaser P."/>
            <person name="Goffeau A."/>
            <person name="Golightly E.J."/>
            <person name="Grandi G."/>
            <person name="Guiseppi G."/>
            <person name="Guy B.J."/>
            <person name="Haga K."/>
            <person name="Haiech J."/>
            <person name="Harwood C.R."/>
            <person name="Henaut A."/>
            <person name="Hilbert H."/>
            <person name="Holsappel S."/>
            <person name="Hosono S."/>
            <person name="Hullo M.-F."/>
            <person name="Itaya M."/>
            <person name="Jones L.-M."/>
            <person name="Joris B."/>
            <person name="Karamata D."/>
            <person name="Kasahara Y."/>
            <person name="Klaerr-Blanchard M."/>
            <person name="Klein C."/>
            <person name="Kobayashi Y."/>
            <person name="Koetter P."/>
            <person name="Koningstein G."/>
            <person name="Krogh S."/>
            <person name="Kumano M."/>
            <person name="Kurita K."/>
            <person name="Lapidus A."/>
            <person name="Lardinois S."/>
            <person name="Lauber J."/>
            <person name="Lazarevic V."/>
            <person name="Lee S.-M."/>
            <person name="Levine A."/>
            <person name="Liu H."/>
            <person name="Masuda S."/>
            <person name="Mauel C."/>
            <person name="Medigue C."/>
            <person name="Medina N."/>
            <person name="Mellado R.P."/>
            <person name="Mizuno M."/>
            <person name="Moestl D."/>
            <person name="Nakai S."/>
            <person name="Noback M."/>
            <person name="Noone D."/>
            <person name="O'Reilly M."/>
            <person name="Ogawa K."/>
            <person name="Ogiwara A."/>
            <person name="Oudega B."/>
            <person name="Park S.-H."/>
            <person name="Parro V."/>
            <person name="Pohl T.M."/>
            <person name="Portetelle D."/>
            <person name="Porwollik S."/>
            <person name="Prescott A.M."/>
            <person name="Presecan E."/>
            <person name="Pujic P."/>
            <person name="Purnelle B."/>
            <person name="Rapoport G."/>
            <person name="Rey M."/>
            <person name="Reynolds S."/>
            <person name="Rieger M."/>
            <person name="Rivolta C."/>
            <person name="Rocha E."/>
            <person name="Roche B."/>
            <person name="Rose M."/>
            <person name="Sadaie Y."/>
            <person name="Sato T."/>
            <person name="Scanlan E."/>
            <person name="Schleich S."/>
            <person name="Schroeter R."/>
            <person name="Scoffone F."/>
            <person name="Sekiguchi J."/>
            <person name="Sekowska A."/>
            <person name="Seror S.J."/>
            <person name="Serror P."/>
            <person name="Shin B.-S."/>
            <person name="Soldo B."/>
            <person name="Sorokin A."/>
            <person name="Tacconi E."/>
            <person name="Takagi T."/>
            <person name="Takahashi H."/>
            <person name="Takemaru K."/>
            <person name="Takeuchi M."/>
            <person name="Tamakoshi A."/>
            <person name="Tanaka T."/>
            <person name="Terpstra P."/>
            <person name="Tognoni A."/>
            <person name="Tosato V."/>
            <person name="Uchiyama S."/>
            <person name="Vandenbol M."/>
            <person name="Vannier F."/>
            <person name="Vassarotti A."/>
            <person name="Viari A."/>
            <person name="Wambutt R."/>
            <person name="Wedler E."/>
            <person name="Wedler H."/>
            <person name="Weitzenegger T."/>
            <person name="Winters P."/>
            <person name="Wipat A."/>
            <person name="Yamamoto H."/>
            <person name="Yamane K."/>
            <person name="Yasumoto K."/>
            <person name="Yata K."/>
            <person name="Yoshida K."/>
            <person name="Yoshikawa H.-F."/>
            <person name="Zumstein E."/>
            <person name="Yoshikawa H."/>
            <person name="Danchin A."/>
        </authorList>
    </citation>
    <scope>NUCLEOTIDE SEQUENCE [LARGE SCALE GENOMIC DNA]</scope>
    <source>
        <strain>168</strain>
    </source>
</reference>
<evidence type="ECO:0000255" key="1"/>
<evidence type="ECO:0000305" key="2"/>
<sequence>MSVFILFYLWIVPIVIGILCSVAAHKSKGKMRVAPGIAMIVLSIISLITAFTAGHTNFHVFIGGMFLFGTFLVGSAFPFFFGLKKKEK</sequence>
<protein>
    <recommendedName>
        <fullName>Uncharacterized membrane protein YdzK</fullName>
    </recommendedName>
</protein>
<dbReference type="EMBL" id="AL009126">
    <property type="protein sequence ID" value="CAX52551.1"/>
    <property type="molecule type" value="Genomic_DNA"/>
</dbReference>
<dbReference type="RefSeq" id="WP_009966591.1">
    <property type="nucleotide sequence ID" value="NZ_OZ025638.1"/>
</dbReference>
<dbReference type="RefSeq" id="YP_003097680.1">
    <property type="nucleotide sequence ID" value="NC_000964.3"/>
</dbReference>
<dbReference type="PaxDb" id="224308-BSU04359"/>
<dbReference type="EnsemblBacteria" id="CAX52551">
    <property type="protein sequence ID" value="CAX52551"/>
    <property type="gene ID" value="BSU_04359"/>
</dbReference>
<dbReference type="GeneID" id="8302999"/>
<dbReference type="KEGG" id="bsu:BSU04359"/>
<dbReference type="PATRIC" id="fig|224308.179.peg.461"/>
<dbReference type="eggNOG" id="ENOG5030CWY">
    <property type="taxonomic scope" value="Bacteria"/>
</dbReference>
<dbReference type="InParanoid" id="C0H3V4"/>
<dbReference type="OrthoDB" id="2916959at2"/>
<dbReference type="BioCyc" id="BSUB:BSU04359-MONOMER"/>
<dbReference type="Proteomes" id="UP000001570">
    <property type="component" value="Chromosome"/>
</dbReference>
<dbReference type="GO" id="GO:0005886">
    <property type="term" value="C:plasma membrane"/>
    <property type="evidence" value="ECO:0007669"/>
    <property type="project" value="UniProtKB-SubCell"/>
</dbReference>
<proteinExistence type="predicted"/>
<name>YDZK_BACSU</name>